<comment type="function">
    <text evidence="1">Formation of pseudouridine at positions 38, 39 and 40 in the anticodon stem and loop of transfer RNAs.</text>
</comment>
<comment type="catalytic activity">
    <reaction evidence="1">
        <text>uridine(38/39/40) in tRNA = pseudouridine(38/39/40) in tRNA</text>
        <dbReference type="Rhea" id="RHEA:22376"/>
        <dbReference type="Rhea" id="RHEA-COMP:10085"/>
        <dbReference type="Rhea" id="RHEA-COMP:10087"/>
        <dbReference type="ChEBI" id="CHEBI:65314"/>
        <dbReference type="ChEBI" id="CHEBI:65315"/>
        <dbReference type="EC" id="5.4.99.12"/>
    </reaction>
</comment>
<comment type="subunit">
    <text evidence="1">Homodimer.</text>
</comment>
<comment type="similarity">
    <text evidence="1">Belongs to the tRNA pseudouridine synthase TruA family.</text>
</comment>
<proteinExistence type="inferred from homology"/>
<protein>
    <recommendedName>
        <fullName evidence="1">tRNA pseudouridine synthase A</fullName>
        <ecNumber evidence="1">5.4.99.12</ecNumber>
    </recommendedName>
    <alternativeName>
        <fullName evidence="1">tRNA pseudouridine(38-40) synthase</fullName>
    </alternativeName>
    <alternativeName>
        <fullName evidence="1">tRNA pseudouridylate synthase I</fullName>
    </alternativeName>
    <alternativeName>
        <fullName evidence="1">tRNA-uridine isomerase I</fullName>
    </alternativeName>
</protein>
<keyword id="KW-0413">Isomerase</keyword>
<keyword id="KW-1185">Reference proteome</keyword>
<keyword id="KW-0819">tRNA processing</keyword>
<evidence type="ECO:0000255" key="1">
    <source>
        <dbReference type="HAMAP-Rule" id="MF_00171"/>
    </source>
</evidence>
<dbReference type="EC" id="5.4.99.12" evidence="1"/>
<dbReference type="EMBL" id="CP001145">
    <property type="protein sequence ID" value="ACI17557.1"/>
    <property type="molecule type" value="Genomic_DNA"/>
</dbReference>
<dbReference type="RefSeq" id="WP_012544209.1">
    <property type="nucleotide sequence ID" value="NC_011295.1"/>
</dbReference>
<dbReference type="SMR" id="B5Y955"/>
<dbReference type="STRING" id="309798.COPRO5265_0979"/>
<dbReference type="KEGG" id="cpo:COPRO5265_0979"/>
<dbReference type="eggNOG" id="COG0101">
    <property type="taxonomic scope" value="Bacteria"/>
</dbReference>
<dbReference type="HOGENOM" id="CLU_014673_0_1_9"/>
<dbReference type="OrthoDB" id="9811823at2"/>
<dbReference type="Proteomes" id="UP000001732">
    <property type="component" value="Chromosome"/>
</dbReference>
<dbReference type="GO" id="GO:0003723">
    <property type="term" value="F:RNA binding"/>
    <property type="evidence" value="ECO:0007669"/>
    <property type="project" value="InterPro"/>
</dbReference>
<dbReference type="GO" id="GO:0160147">
    <property type="term" value="F:tRNA pseudouridine(38-40) synthase activity"/>
    <property type="evidence" value="ECO:0007669"/>
    <property type="project" value="UniProtKB-EC"/>
</dbReference>
<dbReference type="GO" id="GO:0031119">
    <property type="term" value="P:tRNA pseudouridine synthesis"/>
    <property type="evidence" value="ECO:0007669"/>
    <property type="project" value="UniProtKB-UniRule"/>
</dbReference>
<dbReference type="CDD" id="cd02570">
    <property type="entry name" value="PseudoU_synth_EcTruA"/>
    <property type="match status" value="1"/>
</dbReference>
<dbReference type="Gene3D" id="3.30.70.660">
    <property type="entry name" value="Pseudouridine synthase I, catalytic domain, C-terminal subdomain"/>
    <property type="match status" value="1"/>
</dbReference>
<dbReference type="Gene3D" id="3.30.70.580">
    <property type="entry name" value="Pseudouridine synthase I, catalytic domain, N-terminal subdomain"/>
    <property type="match status" value="1"/>
</dbReference>
<dbReference type="HAMAP" id="MF_00171">
    <property type="entry name" value="TruA"/>
    <property type="match status" value="1"/>
</dbReference>
<dbReference type="InterPro" id="IPR020103">
    <property type="entry name" value="PsdUridine_synth_cat_dom_sf"/>
</dbReference>
<dbReference type="InterPro" id="IPR001406">
    <property type="entry name" value="PsdUridine_synth_TruA"/>
</dbReference>
<dbReference type="InterPro" id="IPR020097">
    <property type="entry name" value="PsdUridine_synth_TruA_a/b_dom"/>
</dbReference>
<dbReference type="InterPro" id="IPR020095">
    <property type="entry name" value="PsdUridine_synth_TruA_C"/>
</dbReference>
<dbReference type="InterPro" id="IPR020094">
    <property type="entry name" value="TruA/RsuA/RluB/E/F_N"/>
</dbReference>
<dbReference type="NCBIfam" id="TIGR00071">
    <property type="entry name" value="hisT_truA"/>
    <property type="match status" value="1"/>
</dbReference>
<dbReference type="PANTHER" id="PTHR11142">
    <property type="entry name" value="PSEUDOURIDYLATE SYNTHASE"/>
    <property type="match status" value="1"/>
</dbReference>
<dbReference type="PANTHER" id="PTHR11142:SF0">
    <property type="entry name" value="TRNA PSEUDOURIDINE SYNTHASE-LIKE 1"/>
    <property type="match status" value="1"/>
</dbReference>
<dbReference type="Pfam" id="PF01416">
    <property type="entry name" value="PseudoU_synth_1"/>
    <property type="match status" value="2"/>
</dbReference>
<dbReference type="PIRSF" id="PIRSF001430">
    <property type="entry name" value="tRNA_psdUrid_synth"/>
    <property type="match status" value="1"/>
</dbReference>
<dbReference type="SUPFAM" id="SSF55120">
    <property type="entry name" value="Pseudouridine synthase"/>
    <property type="match status" value="1"/>
</dbReference>
<name>TRUA_COPPD</name>
<reference key="1">
    <citation type="submission" date="2008-08" db="EMBL/GenBank/DDBJ databases">
        <title>The complete genome sequence of Coprothermobacter proteolyticus strain ATCC 5245 / DSM 5265 / BT.</title>
        <authorList>
            <person name="Dodson R.J."/>
            <person name="Durkin A.S."/>
            <person name="Wu M."/>
            <person name="Eisen J."/>
            <person name="Sutton G."/>
        </authorList>
    </citation>
    <scope>NUCLEOTIDE SEQUENCE [LARGE SCALE GENOMIC DNA]</scope>
    <source>
        <strain>ATCC 35245 / DSM 5265 / OCM 4 / BT</strain>
    </source>
</reference>
<accession>B5Y955</accession>
<feature type="chain" id="PRO_1000097734" description="tRNA pseudouridine synthase A">
    <location>
        <begin position="1"/>
        <end position="259"/>
    </location>
</feature>
<feature type="active site" description="Nucleophile" evidence="1">
    <location>
        <position position="52"/>
    </location>
</feature>
<feature type="binding site" evidence="1">
    <location>
        <position position="110"/>
    </location>
    <ligand>
        <name>substrate</name>
    </ligand>
</feature>
<organism>
    <name type="scientific">Coprothermobacter proteolyticus (strain ATCC 35245 / DSM 5265 / OCM 4 / BT)</name>
    <dbReference type="NCBI Taxonomy" id="309798"/>
    <lineage>
        <taxon>Bacteria</taxon>
        <taxon>Pseudomonadati</taxon>
        <taxon>Coprothermobacterota</taxon>
        <taxon>Coprothermobacteria</taxon>
        <taxon>Coprothermobacterales</taxon>
        <taxon>Coprothermobacteraceae</taxon>
        <taxon>Coprothermobacter</taxon>
    </lineage>
</organism>
<gene>
    <name evidence="1" type="primary">truA</name>
    <name type="ordered locus">COPRO5265_0979</name>
</gene>
<sequence>MVKYAGLLQFKGTNYAGFQRQKNGTAIQNVLESTLSQINNRATVVRYSGRTDAGVHAWGMPFVFWGREDLSADKWMFILNRMLPKDMRVISVVRTSPEFDPQLSAVAKQYLYCATQERLGPLWDDFFAYLPNLSIETSAVISAARKLVGEHDFKGFSKKGSSVKSTRRKLYEVSVMFTHSRMYFSFVGNGFLYGMVRLMVGTLLQIGWGKQDVNFIDEVLSGNAVANYSAPAQGLHLVKVWLEPDPFLESVKANERDFS</sequence>